<organism>
    <name type="scientific">Sulfurihydrogenibium sp. (strain YO3AOP1)</name>
    <dbReference type="NCBI Taxonomy" id="436114"/>
    <lineage>
        <taxon>Bacteria</taxon>
        <taxon>Pseudomonadati</taxon>
        <taxon>Aquificota</taxon>
        <taxon>Aquificia</taxon>
        <taxon>Aquificales</taxon>
        <taxon>Hydrogenothermaceae</taxon>
        <taxon>Sulfurihydrogenibium</taxon>
    </lineage>
</organism>
<sequence>MAKLSPRDIKRKINGIKNTQRITKAMKAVSAAKLRKAQALLYATRPYSNKLYELIEDLAVYIDRESHPLLEKREEKSVDLVIITADRGLAGAFNSNVIKTAWREIQRLKSEGKEVSLLLIGRKGVNFYKNKGFNIIEAYEDIYRDQVNLTYTAKVGGILASRFIDKKSDAVYLINNELITSSTYETKIRKLLPLESTASSKKLEEVSVYNIEPSKEEVLSSLLQRYINYQLFRALVESSTAEHSARMLAMDNATKNAGEAIRKWTIIFNKARQEAITTELIDIINAAEAIK</sequence>
<dbReference type="EMBL" id="CP001080">
    <property type="protein sequence ID" value="ACD67217.1"/>
    <property type="molecule type" value="Genomic_DNA"/>
</dbReference>
<dbReference type="RefSeq" id="WP_012460273.1">
    <property type="nucleotide sequence ID" value="NC_010730.1"/>
</dbReference>
<dbReference type="SMR" id="B2V6N5"/>
<dbReference type="STRING" id="436114.SYO3AOP1_1619"/>
<dbReference type="KEGG" id="sul:SYO3AOP1_1619"/>
<dbReference type="eggNOG" id="COG0224">
    <property type="taxonomic scope" value="Bacteria"/>
</dbReference>
<dbReference type="HOGENOM" id="CLU_050669_0_1_0"/>
<dbReference type="GO" id="GO:0005886">
    <property type="term" value="C:plasma membrane"/>
    <property type="evidence" value="ECO:0007669"/>
    <property type="project" value="UniProtKB-SubCell"/>
</dbReference>
<dbReference type="GO" id="GO:0045259">
    <property type="term" value="C:proton-transporting ATP synthase complex"/>
    <property type="evidence" value="ECO:0007669"/>
    <property type="project" value="UniProtKB-KW"/>
</dbReference>
<dbReference type="GO" id="GO:0005524">
    <property type="term" value="F:ATP binding"/>
    <property type="evidence" value="ECO:0007669"/>
    <property type="project" value="UniProtKB-UniRule"/>
</dbReference>
<dbReference type="GO" id="GO:0046933">
    <property type="term" value="F:proton-transporting ATP synthase activity, rotational mechanism"/>
    <property type="evidence" value="ECO:0007669"/>
    <property type="project" value="UniProtKB-UniRule"/>
</dbReference>
<dbReference type="GO" id="GO:0042777">
    <property type="term" value="P:proton motive force-driven plasma membrane ATP synthesis"/>
    <property type="evidence" value="ECO:0007669"/>
    <property type="project" value="UniProtKB-UniRule"/>
</dbReference>
<dbReference type="CDD" id="cd12151">
    <property type="entry name" value="F1-ATPase_gamma"/>
    <property type="match status" value="1"/>
</dbReference>
<dbReference type="Gene3D" id="3.40.1380.10">
    <property type="match status" value="1"/>
</dbReference>
<dbReference type="Gene3D" id="1.10.287.80">
    <property type="entry name" value="ATP synthase, gamma subunit, helix hairpin domain"/>
    <property type="match status" value="1"/>
</dbReference>
<dbReference type="HAMAP" id="MF_00815">
    <property type="entry name" value="ATP_synth_gamma_bact"/>
    <property type="match status" value="1"/>
</dbReference>
<dbReference type="InterPro" id="IPR035968">
    <property type="entry name" value="ATP_synth_F1_ATPase_gsu"/>
</dbReference>
<dbReference type="InterPro" id="IPR000131">
    <property type="entry name" value="ATP_synth_F1_gsu"/>
</dbReference>
<dbReference type="NCBIfam" id="TIGR01146">
    <property type="entry name" value="ATPsyn_F1gamma"/>
    <property type="match status" value="1"/>
</dbReference>
<dbReference type="NCBIfam" id="NF010708">
    <property type="entry name" value="PRK14110.1"/>
    <property type="match status" value="1"/>
</dbReference>
<dbReference type="PANTHER" id="PTHR11693">
    <property type="entry name" value="ATP SYNTHASE GAMMA CHAIN"/>
    <property type="match status" value="1"/>
</dbReference>
<dbReference type="PANTHER" id="PTHR11693:SF22">
    <property type="entry name" value="ATP SYNTHASE SUBUNIT GAMMA, MITOCHONDRIAL"/>
    <property type="match status" value="1"/>
</dbReference>
<dbReference type="Pfam" id="PF00231">
    <property type="entry name" value="ATP-synt"/>
    <property type="match status" value="1"/>
</dbReference>
<dbReference type="PRINTS" id="PR00126">
    <property type="entry name" value="ATPASEGAMMA"/>
</dbReference>
<dbReference type="SUPFAM" id="SSF52943">
    <property type="entry name" value="ATP synthase (F1-ATPase), gamma subunit"/>
    <property type="match status" value="1"/>
</dbReference>
<evidence type="ECO:0000255" key="1">
    <source>
        <dbReference type="HAMAP-Rule" id="MF_00815"/>
    </source>
</evidence>
<accession>B2V6N5</accession>
<proteinExistence type="inferred from homology"/>
<keyword id="KW-0066">ATP synthesis</keyword>
<keyword id="KW-0997">Cell inner membrane</keyword>
<keyword id="KW-1003">Cell membrane</keyword>
<keyword id="KW-0139">CF(1)</keyword>
<keyword id="KW-0375">Hydrogen ion transport</keyword>
<keyword id="KW-0406">Ion transport</keyword>
<keyword id="KW-0472">Membrane</keyword>
<keyword id="KW-0813">Transport</keyword>
<gene>
    <name evidence="1" type="primary">atpG</name>
    <name type="ordered locus">SYO3AOP1_1619</name>
</gene>
<name>ATPG_SULSY</name>
<protein>
    <recommendedName>
        <fullName evidence="1">ATP synthase gamma chain</fullName>
    </recommendedName>
    <alternativeName>
        <fullName evidence="1">ATP synthase F1 sector gamma subunit</fullName>
    </alternativeName>
    <alternativeName>
        <fullName evidence="1">F-ATPase gamma subunit</fullName>
    </alternativeName>
</protein>
<feature type="chain" id="PRO_1000134216" description="ATP synthase gamma chain">
    <location>
        <begin position="1"/>
        <end position="291"/>
    </location>
</feature>
<reference key="1">
    <citation type="journal article" date="2009" name="J. Bacteriol.">
        <title>Complete and draft genome sequences of six members of the Aquificales.</title>
        <authorList>
            <person name="Reysenbach A.-L."/>
            <person name="Hamamura N."/>
            <person name="Podar M."/>
            <person name="Griffiths E."/>
            <person name="Ferreira S."/>
            <person name="Hochstein R."/>
            <person name="Heidelberg J."/>
            <person name="Johnson J."/>
            <person name="Mead D."/>
            <person name="Pohorille A."/>
            <person name="Sarmiento M."/>
            <person name="Schweighofer K."/>
            <person name="Seshadri R."/>
            <person name="Voytek M.A."/>
        </authorList>
    </citation>
    <scope>NUCLEOTIDE SEQUENCE [LARGE SCALE GENOMIC DNA]</scope>
    <source>
        <strain>YO3AOP1</strain>
    </source>
</reference>
<comment type="function">
    <text evidence="1">Produces ATP from ADP in the presence of a proton gradient across the membrane. The gamma chain is believed to be important in regulating ATPase activity and the flow of protons through the CF(0) complex.</text>
</comment>
<comment type="subunit">
    <text evidence="1">F-type ATPases have 2 components, CF(1) - the catalytic core - and CF(0) - the membrane proton channel. CF(1) has five subunits: alpha(3), beta(3), gamma(1), delta(1), epsilon(1). CF(0) has three main subunits: a, b and c.</text>
</comment>
<comment type="subcellular location">
    <subcellularLocation>
        <location evidence="1">Cell inner membrane</location>
        <topology evidence="1">Peripheral membrane protein</topology>
    </subcellularLocation>
</comment>
<comment type="similarity">
    <text evidence="1">Belongs to the ATPase gamma chain family.</text>
</comment>